<keyword id="KW-0001">2Fe-2S</keyword>
<keyword id="KW-0004">4Fe-4S</keyword>
<keyword id="KW-0093">Biotin biosynthesis</keyword>
<keyword id="KW-0408">Iron</keyword>
<keyword id="KW-0411">Iron-sulfur</keyword>
<keyword id="KW-0479">Metal-binding</keyword>
<keyword id="KW-1185">Reference proteome</keyword>
<keyword id="KW-0949">S-adenosyl-L-methionine</keyword>
<keyword id="KW-0808">Transferase</keyword>
<name>BIOB_BURPS</name>
<accession>Q63Y25</accession>
<reference key="1">
    <citation type="journal article" date="2004" name="Proc. Natl. Acad. Sci. U.S.A.">
        <title>Genomic plasticity of the causative agent of melioidosis, Burkholderia pseudomallei.</title>
        <authorList>
            <person name="Holden M.T.G."/>
            <person name="Titball R.W."/>
            <person name="Peacock S.J."/>
            <person name="Cerdeno-Tarraga A.-M."/>
            <person name="Atkins T."/>
            <person name="Crossman L.C."/>
            <person name="Pitt T."/>
            <person name="Churcher C."/>
            <person name="Mungall K.L."/>
            <person name="Bentley S.D."/>
            <person name="Sebaihia M."/>
            <person name="Thomson N.R."/>
            <person name="Bason N."/>
            <person name="Beacham I.R."/>
            <person name="Brooks K."/>
            <person name="Brown K.A."/>
            <person name="Brown N.F."/>
            <person name="Challis G.L."/>
            <person name="Cherevach I."/>
            <person name="Chillingworth T."/>
            <person name="Cronin A."/>
            <person name="Crossett B."/>
            <person name="Davis P."/>
            <person name="DeShazer D."/>
            <person name="Feltwell T."/>
            <person name="Fraser A."/>
            <person name="Hance Z."/>
            <person name="Hauser H."/>
            <person name="Holroyd S."/>
            <person name="Jagels K."/>
            <person name="Keith K.E."/>
            <person name="Maddison M."/>
            <person name="Moule S."/>
            <person name="Price C."/>
            <person name="Quail M.A."/>
            <person name="Rabbinowitsch E."/>
            <person name="Rutherford K."/>
            <person name="Sanders M."/>
            <person name="Simmonds M."/>
            <person name="Songsivilai S."/>
            <person name="Stevens K."/>
            <person name="Tumapa S."/>
            <person name="Vesaratchavest M."/>
            <person name="Whitehead S."/>
            <person name="Yeats C."/>
            <person name="Barrell B.G."/>
            <person name="Oyston P.C.F."/>
            <person name="Parkhill J."/>
        </authorList>
    </citation>
    <scope>NUCLEOTIDE SEQUENCE [LARGE SCALE GENOMIC DNA]</scope>
    <source>
        <strain>K96243</strain>
    </source>
</reference>
<dbReference type="EC" id="2.8.1.6" evidence="1"/>
<dbReference type="EMBL" id="BX571965">
    <property type="protein sequence ID" value="CAH34352.1"/>
    <property type="status" value="ALT_INIT"/>
    <property type="molecule type" value="Genomic_DNA"/>
</dbReference>
<dbReference type="RefSeq" id="WP_004548304.1">
    <property type="nucleotide sequence ID" value="NZ_CP009538.1"/>
</dbReference>
<dbReference type="RefSeq" id="YP_106990.1">
    <property type="nucleotide sequence ID" value="NC_006350.1"/>
</dbReference>
<dbReference type="SMR" id="Q63Y25"/>
<dbReference type="STRING" id="272560.BPSL0364"/>
<dbReference type="KEGG" id="bps:BPSL0364"/>
<dbReference type="PATRIC" id="fig|272560.51.peg.1306"/>
<dbReference type="eggNOG" id="COG0502">
    <property type="taxonomic scope" value="Bacteria"/>
</dbReference>
<dbReference type="UniPathway" id="UPA00078">
    <property type="reaction ID" value="UER00162"/>
</dbReference>
<dbReference type="Proteomes" id="UP000000605">
    <property type="component" value="Chromosome 1"/>
</dbReference>
<dbReference type="GO" id="GO:0051537">
    <property type="term" value="F:2 iron, 2 sulfur cluster binding"/>
    <property type="evidence" value="ECO:0007669"/>
    <property type="project" value="UniProtKB-KW"/>
</dbReference>
<dbReference type="GO" id="GO:0051539">
    <property type="term" value="F:4 iron, 4 sulfur cluster binding"/>
    <property type="evidence" value="ECO:0007669"/>
    <property type="project" value="UniProtKB-KW"/>
</dbReference>
<dbReference type="GO" id="GO:0004076">
    <property type="term" value="F:biotin synthase activity"/>
    <property type="evidence" value="ECO:0007669"/>
    <property type="project" value="UniProtKB-UniRule"/>
</dbReference>
<dbReference type="GO" id="GO:0005506">
    <property type="term" value="F:iron ion binding"/>
    <property type="evidence" value="ECO:0007669"/>
    <property type="project" value="UniProtKB-UniRule"/>
</dbReference>
<dbReference type="GO" id="GO:0009102">
    <property type="term" value="P:biotin biosynthetic process"/>
    <property type="evidence" value="ECO:0007669"/>
    <property type="project" value="UniProtKB-UniRule"/>
</dbReference>
<dbReference type="CDD" id="cd01335">
    <property type="entry name" value="Radical_SAM"/>
    <property type="match status" value="1"/>
</dbReference>
<dbReference type="FunFam" id="3.20.20.70:FF:000011">
    <property type="entry name" value="Biotin synthase"/>
    <property type="match status" value="1"/>
</dbReference>
<dbReference type="Gene3D" id="3.20.20.70">
    <property type="entry name" value="Aldolase class I"/>
    <property type="match status" value="1"/>
</dbReference>
<dbReference type="HAMAP" id="MF_01694">
    <property type="entry name" value="BioB"/>
    <property type="match status" value="1"/>
</dbReference>
<dbReference type="InterPro" id="IPR013785">
    <property type="entry name" value="Aldolase_TIM"/>
</dbReference>
<dbReference type="InterPro" id="IPR010722">
    <property type="entry name" value="BATS_dom"/>
</dbReference>
<dbReference type="InterPro" id="IPR002684">
    <property type="entry name" value="Biotin_synth/BioAB"/>
</dbReference>
<dbReference type="InterPro" id="IPR024177">
    <property type="entry name" value="Biotin_synthase"/>
</dbReference>
<dbReference type="InterPro" id="IPR006638">
    <property type="entry name" value="Elp3/MiaA/NifB-like_rSAM"/>
</dbReference>
<dbReference type="InterPro" id="IPR007197">
    <property type="entry name" value="rSAM"/>
</dbReference>
<dbReference type="NCBIfam" id="TIGR00433">
    <property type="entry name" value="bioB"/>
    <property type="match status" value="1"/>
</dbReference>
<dbReference type="PANTHER" id="PTHR22976">
    <property type="entry name" value="BIOTIN SYNTHASE"/>
    <property type="match status" value="1"/>
</dbReference>
<dbReference type="PANTHER" id="PTHR22976:SF2">
    <property type="entry name" value="BIOTIN SYNTHASE, MITOCHONDRIAL"/>
    <property type="match status" value="1"/>
</dbReference>
<dbReference type="Pfam" id="PF06968">
    <property type="entry name" value="BATS"/>
    <property type="match status" value="1"/>
</dbReference>
<dbReference type="Pfam" id="PF04055">
    <property type="entry name" value="Radical_SAM"/>
    <property type="match status" value="1"/>
</dbReference>
<dbReference type="PIRSF" id="PIRSF001619">
    <property type="entry name" value="Biotin_synth"/>
    <property type="match status" value="1"/>
</dbReference>
<dbReference type="SFLD" id="SFLDF00272">
    <property type="entry name" value="biotin_synthase"/>
    <property type="match status" value="1"/>
</dbReference>
<dbReference type="SFLD" id="SFLDS00029">
    <property type="entry name" value="Radical_SAM"/>
    <property type="match status" value="1"/>
</dbReference>
<dbReference type="SMART" id="SM00876">
    <property type="entry name" value="BATS"/>
    <property type="match status" value="1"/>
</dbReference>
<dbReference type="SMART" id="SM00729">
    <property type="entry name" value="Elp3"/>
    <property type="match status" value="1"/>
</dbReference>
<dbReference type="SUPFAM" id="SSF102114">
    <property type="entry name" value="Radical SAM enzymes"/>
    <property type="match status" value="1"/>
</dbReference>
<dbReference type="PROSITE" id="PS51918">
    <property type="entry name" value="RADICAL_SAM"/>
    <property type="match status" value="1"/>
</dbReference>
<proteinExistence type="inferred from homology"/>
<gene>
    <name evidence="1" type="primary">bioB</name>
    <name type="ordered locus">BPSL0364</name>
</gene>
<organism>
    <name type="scientific">Burkholderia pseudomallei (strain K96243)</name>
    <dbReference type="NCBI Taxonomy" id="272560"/>
    <lineage>
        <taxon>Bacteria</taxon>
        <taxon>Pseudomonadati</taxon>
        <taxon>Pseudomonadota</taxon>
        <taxon>Betaproteobacteria</taxon>
        <taxon>Burkholderiales</taxon>
        <taxon>Burkholderiaceae</taxon>
        <taxon>Burkholderia</taxon>
        <taxon>pseudomallei group</taxon>
    </lineage>
</organism>
<protein>
    <recommendedName>
        <fullName evidence="1">Biotin synthase</fullName>
        <ecNumber evidence="1">2.8.1.6</ecNumber>
    </recommendedName>
</protein>
<evidence type="ECO:0000255" key="1">
    <source>
        <dbReference type="HAMAP-Rule" id="MF_01694"/>
    </source>
</evidence>
<evidence type="ECO:0000255" key="2">
    <source>
        <dbReference type="PROSITE-ProRule" id="PRU01266"/>
    </source>
</evidence>
<evidence type="ECO:0000305" key="3"/>
<feature type="chain" id="PRO_0000381274" description="Biotin synthase">
    <location>
        <begin position="1"/>
        <end position="336"/>
    </location>
</feature>
<feature type="domain" description="Radical SAM core" evidence="2">
    <location>
        <begin position="54"/>
        <end position="281"/>
    </location>
</feature>
<feature type="binding site" evidence="1">
    <location>
        <position position="69"/>
    </location>
    <ligand>
        <name>[4Fe-4S] cluster</name>
        <dbReference type="ChEBI" id="CHEBI:49883"/>
        <note>4Fe-4S-S-AdoMet</note>
    </ligand>
</feature>
<feature type="binding site" evidence="1">
    <location>
        <position position="73"/>
    </location>
    <ligand>
        <name>[4Fe-4S] cluster</name>
        <dbReference type="ChEBI" id="CHEBI:49883"/>
        <note>4Fe-4S-S-AdoMet</note>
    </ligand>
</feature>
<feature type="binding site" evidence="1">
    <location>
        <position position="76"/>
    </location>
    <ligand>
        <name>[4Fe-4S] cluster</name>
        <dbReference type="ChEBI" id="CHEBI:49883"/>
        <note>4Fe-4S-S-AdoMet</note>
    </ligand>
</feature>
<feature type="binding site" evidence="1">
    <location>
        <position position="113"/>
    </location>
    <ligand>
        <name>[2Fe-2S] cluster</name>
        <dbReference type="ChEBI" id="CHEBI:190135"/>
    </ligand>
</feature>
<feature type="binding site" evidence="1">
    <location>
        <position position="144"/>
    </location>
    <ligand>
        <name>[2Fe-2S] cluster</name>
        <dbReference type="ChEBI" id="CHEBI:190135"/>
    </ligand>
</feature>
<feature type="binding site" evidence="1">
    <location>
        <position position="204"/>
    </location>
    <ligand>
        <name>[2Fe-2S] cluster</name>
        <dbReference type="ChEBI" id="CHEBI:190135"/>
    </ligand>
</feature>
<feature type="binding site" evidence="1">
    <location>
        <position position="276"/>
    </location>
    <ligand>
        <name>[2Fe-2S] cluster</name>
        <dbReference type="ChEBI" id="CHEBI:190135"/>
    </ligand>
</feature>
<comment type="function">
    <text evidence="1">Catalyzes the conversion of dethiobiotin (DTB) to biotin by the insertion of a sulfur atom into dethiobiotin via a radical-based mechanism.</text>
</comment>
<comment type="catalytic activity">
    <reaction evidence="1">
        <text>(4R,5S)-dethiobiotin + (sulfur carrier)-SH + 2 reduced [2Fe-2S]-[ferredoxin] + 2 S-adenosyl-L-methionine = (sulfur carrier)-H + biotin + 2 5'-deoxyadenosine + 2 L-methionine + 2 oxidized [2Fe-2S]-[ferredoxin]</text>
        <dbReference type="Rhea" id="RHEA:22060"/>
        <dbReference type="Rhea" id="RHEA-COMP:10000"/>
        <dbReference type="Rhea" id="RHEA-COMP:10001"/>
        <dbReference type="Rhea" id="RHEA-COMP:14737"/>
        <dbReference type="Rhea" id="RHEA-COMP:14739"/>
        <dbReference type="ChEBI" id="CHEBI:17319"/>
        <dbReference type="ChEBI" id="CHEBI:29917"/>
        <dbReference type="ChEBI" id="CHEBI:33737"/>
        <dbReference type="ChEBI" id="CHEBI:33738"/>
        <dbReference type="ChEBI" id="CHEBI:57586"/>
        <dbReference type="ChEBI" id="CHEBI:57844"/>
        <dbReference type="ChEBI" id="CHEBI:59789"/>
        <dbReference type="ChEBI" id="CHEBI:64428"/>
        <dbReference type="ChEBI" id="CHEBI:149473"/>
        <dbReference type="EC" id="2.8.1.6"/>
    </reaction>
</comment>
<comment type="cofactor">
    <cofactor evidence="1">
        <name>[4Fe-4S] cluster</name>
        <dbReference type="ChEBI" id="CHEBI:49883"/>
    </cofactor>
    <text evidence="1">Binds 1 [4Fe-4S] cluster. The cluster is coordinated with 3 cysteines and an exchangeable S-adenosyl-L-methionine.</text>
</comment>
<comment type="cofactor">
    <cofactor evidence="1">
        <name>[2Fe-2S] cluster</name>
        <dbReference type="ChEBI" id="CHEBI:190135"/>
    </cofactor>
    <text evidence="1">Binds 1 [2Fe-2S] cluster. The cluster is coordinated with 3 cysteines and 1 arginine.</text>
</comment>
<comment type="pathway">
    <text evidence="1">Cofactor biosynthesis; biotin biosynthesis; biotin from 7,8-diaminononanoate: step 2/2.</text>
</comment>
<comment type="subunit">
    <text evidence="1">Homodimer.</text>
</comment>
<comment type="similarity">
    <text evidence="1">Belongs to the radical SAM superfamily. Biotin synthase family.</text>
</comment>
<comment type="sequence caution" evidence="3">
    <conflict type="erroneous initiation">
        <sequence resource="EMBL-CDS" id="CAH34352"/>
    </conflict>
</comment>
<sequence>MTEAQTACATTETPVAAPAAPRWRVADVIALYELPFNDLLFRAQQTHREHFDANAIQLSTLLSIKTGGCEEDCGYCSQSAHHDTGLKAEKLMEVDAVLAAARTAKENGATRFCMGAAWRNPKDRHIEPIKEMIRGVKDMGLETCVTLGMLEEHQAKALAEAGLDYYNHNLDTSPEFYGQIISTRTYQDRLDTLERVRDAGINVCCGGIIGMGESRRERAGLIAQLANMNPYPESVPINNLVAIEGTPLENAQALDPFEFVRTIAVARITMPKAMVRLSAGREQLDDAMQALCFLAGANSMFYGDVLLTTGNPRAEADRKLLARLGMWASEASQLSA</sequence>